<organism>
    <name type="scientific">Mycoplasma genitalium (strain ATCC 33530 / DSM 19775 / NCTC 10195 / G37)</name>
    <name type="common">Mycoplasmoides genitalium</name>
    <dbReference type="NCBI Taxonomy" id="243273"/>
    <lineage>
        <taxon>Bacteria</taxon>
        <taxon>Bacillati</taxon>
        <taxon>Mycoplasmatota</taxon>
        <taxon>Mycoplasmoidales</taxon>
        <taxon>Mycoplasmoidaceae</taxon>
        <taxon>Mycoplasmoides</taxon>
    </lineage>
</organism>
<dbReference type="EMBL" id="L43967">
    <property type="protein sequence ID" value="AAC71308.1"/>
    <property type="molecule type" value="Genomic_DNA"/>
</dbReference>
<dbReference type="EMBL" id="U02136">
    <property type="protein sequence ID" value="AAD12413.1"/>
    <property type="status" value="ALT_INIT"/>
    <property type="molecule type" value="Genomic_DNA"/>
</dbReference>
<dbReference type="PIR" id="I64209">
    <property type="entry name" value="I64209"/>
</dbReference>
<dbReference type="RefSeq" id="WP_009885647.1">
    <property type="nucleotide sequence ID" value="NC_000908.2"/>
</dbReference>
<dbReference type="SMR" id="P47336"/>
<dbReference type="STRING" id="243273.MG_090"/>
<dbReference type="GeneID" id="88282213"/>
<dbReference type="KEGG" id="mge:MG_090"/>
<dbReference type="eggNOG" id="COG0360">
    <property type="taxonomic scope" value="Bacteria"/>
</dbReference>
<dbReference type="HOGENOM" id="CLU_1282053_0_0_14"/>
<dbReference type="InParanoid" id="P47336"/>
<dbReference type="OrthoDB" id="397558at2"/>
<dbReference type="BioCyc" id="MGEN243273:G1GJ2-102-MONOMER"/>
<dbReference type="Proteomes" id="UP000000807">
    <property type="component" value="Chromosome"/>
</dbReference>
<dbReference type="GO" id="GO:0005737">
    <property type="term" value="C:cytoplasm"/>
    <property type="evidence" value="ECO:0007669"/>
    <property type="project" value="UniProtKB-ARBA"/>
</dbReference>
<dbReference type="GO" id="GO:1990904">
    <property type="term" value="C:ribonucleoprotein complex"/>
    <property type="evidence" value="ECO:0007669"/>
    <property type="project" value="UniProtKB-KW"/>
</dbReference>
<dbReference type="GO" id="GO:0005840">
    <property type="term" value="C:ribosome"/>
    <property type="evidence" value="ECO:0007669"/>
    <property type="project" value="UniProtKB-KW"/>
</dbReference>
<dbReference type="GO" id="GO:0070181">
    <property type="term" value="F:small ribosomal subunit rRNA binding"/>
    <property type="evidence" value="ECO:0000318"/>
    <property type="project" value="GO_Central"/>
</dbReference>
<dbReference type="GO" id="GO:0003735">
    <property type="term" value="F:structural constituent of ribosome"/>
    <property type="evidence" value="ECO:0000318"/>
    <property type="project" value="GO_Central"/>
</dbReference>
<dbReference type="GO" id="GO:0006412">
    <property type="term" value="P:translation"/>
    <property type="evidence" value="ECO:0007669"/>
    <property type="project" value="UniProtKB-UniRule"/>
</dbReference>
<dbReference type="CDD" id="cd00473">
    <property type="entry name" value="bS6"/>
    <property type="match status" value="1"/>
</dbReference>
<dbReference type="Gene3D" id="3.30.70.60">
    <property type="match status" value="1"/>
</dbReference>
<dbReference type="HAMAP" id="MF_00360">
    <property type="entry name" value="Ribosomal_bS6"/>
    <property type="match status" value="1"/>
</dbReference>
<dbReference type="InterPro" id="IPR000529">
    <property type="entry name" value="Ribosomal_bS6"/>
</dbReference>
<dbReference type="InterPro" id="IPR020815">
    <property type="entry name" value="Ribosomal_bS6_CS"/>
</dbReference>
<dbReference type="InterPro" id="IPR035980">
    <property type="entry name" value="Ribosomal_bS6_sf"/>
</dbReference>
<dbReference type="InterPro" id="IPR020814">
    <property type="entry name" value="Ribosomal_S6_plastid/chlpt"/>
</dbReference>
<dbReference type="InterPro" id="IPR014717">
    <property type="entry name" value="Transl_elong_EF1B/ribsomal_bS6"/>
</dbReference>
<dbReference type="NCBIfam" id="TIGR00166">
    <property type="entry name" value="S6"/>
    <property type="match status" value="1"/>
</dbReference>
<dbReference type="PANTHER" id="PTHR21011">
    <property type="entry name" value="MITOCHONDRIAL 28S RIBOSOMAL PROTEIN S6"/>
    <property type="match status" value="1"/>
</dbReference>
<dbReference type="PANTHER" id="PTHR21011:SF1">
    <property type="entry name" value="SMALL RIBOSOMAL SUBUNIT PROTEIN BS6M"/>
    <property type="match status" value="1"/>
</dbReference>
<dbReference type="Pfam" id="PF01250">
    <property type="entry name" value="Ribosomal_S6"/>
    <property type="match status" value="1"/>
</dbReference>
<dbReference type="SUPFAM" id="SSF54995">
    <property type="entry name" value="Ribosomal protein S6"/>
    <property type="match status" value="1"/>
</dbReference>
<dbReference type="PROSITE" id="PS01048">
    <property type="entry name" value="RIBOSOMAL_S6"/>
    <property type="match status" value="1"/>
</dbReference>
<reference key="1">
    <citation type="journal article" date="1995" name="Science">
        <title>The minimal gene complement of Mycoplasma genitalium.</title>
        <authorList>
            <person name="Fraser C.M."/>
            <person name="Gocayne J.D."/>
            <person name="White O."/>
            <person name="Adams M.D."/>
            <person name="Clayton R.A."/>
            <person name="Fleischmann R.D."/>
            <person name="Bult C.J."/>
            <person name="Kerlavage A.R."/>
            <person name="Sutton G.G."/>
            <person name="Kelley J.M."/>
            <person name="Fritchman J.L."/>
            <person name="Weidman J.F."/>
            <person name="Small K.V."/>
            <person name="Sandusky M."/>
            <person name="Fuhrmann J.L."/>
            <person name="Nguyen D.T."/>
            <person name="Utterback T.R."/>
            <person name="Saudek D.M."/>
            <person name="Phillips C.A."/>
            <person name="Merrick J.M."/>
            <person name="Tomb J.-F."/>
            <person name="Dougherty B.A."/>
            <person name="Bott K.F."/>
            <person name="Hu P.-C."/>
            <person name="Lucier T.S."/>
            <person name="Peterson S.N."/>
            <person name="Smith H.O."/>
            <person name="Hutchison C.A. III"/>
            <person name="Venter J.C."/>
        </authorList>
    </citation>
    <scope>NUCLEOTIDE SEQUENCE [LARGE SCALE GENOMIC DNA]</scope>
    <source>
        <strain>ATCC 33530 / DSM 19775 / NCTC 10195 / G37</strain>
    </source>
</reference>
<reference key="2">
    <citation type="journal article" date="1993" name="J. Bacteriol.">
        <title>A survey of the Mycoplasma genitalium genome by using random sequencing.</title>
        <authorList>
            <person name="Peterson S.N."/>
            <person name="Hu P.-C."/>
            <person name="Bott K.F."/>
            <person name="Hutchison C.A. III"/>
        </authorList>
    </citation>
    <scope>NUCLEOTIDE SEQUENCE [GENOMIC DNA] OF 1-58</scope>
    <source>
        <strain>ATCC 33530 / DSM 19775 / NCTC 10195 / G37</strain>
    </source>
</reference>
<protein>
    <recommendedName>
        <fullName evidence="3">Small ribosomal subunit protein bS6</fullName>
    </recommendedName>
    <alternativeName>
        <fullName>30S ribosomal protein S6</fullName>
    </alternativeName>
</protein>
<feature type="chain" id="PRO_0000176795" description="Small ribosomal subunit protein bS6">
    <location>
        <begin position="1"/>
        <end position="208"/>
    </location>
</feature>
<feature type="region of interest" description="Disordered" evidence="2">
    <location>
        <begin position="121"/>
        <end position="143"/>
    </location>
</feature>
<feature type="region of interest" description="Disordered" evidence="2">
    <location>
        <begin position="185"/>
        <end position="208"/>
    </location>
</feature>
<feature type="compositionally biased region" description="Low complexity" evidence="2">
    <location>
        <begin position="185"/>
        <end position="195"/>
    </location>
</feature>
<evidence type="ECO:0000250" key="1"/>
<evidence type="ECO:0000256" key="2">
    <source>
        <dbReference type="SAM" id="MobiDB-lite"/>
    </source>
</evidence>
<evidence type="ECO:0000305" key="3"/>
<accession>P47336</accession>
<accession>Q49266</accession>
<gene>
    <name type="primary">rpsF</name>
    <name type="synonym">rps6</name>
    <name type="ordered locus">MG090</name>
</gene>
<name>RS6_MYCGE</name>
<proteinExistence type="inferred from homology"/>
<keyword id="KW-1185">Reference proteome</keyword>
<keyword id="KW-0687">Ribonucleoprotein</keyword>
<keyword id="KW-0689">Ribosomal protein</keyword>
<keyword id="KW-0694">RNA-binding</keyword>
<keyword id="KW-0699">rRNA-binding</keyword>
<comment type="function">
    <text evidence="1">Binds together with bS18 to 16S ribosomal RNA.</text>
</comment>
<comment type="similarity">
    <text evidence="3">Belongs to the bacterial ribosomal protein bS6 family.</text>
</comment>
<comment type="sequence caution" evidence="3">
    <conflict type="erroneous initiation">
        <sequence resource="EMBL-CDS" id="AAD12413"/>
    </conflict>
</comment>
<sequence>MHYNIILLVDGTLSLEQANQVEQKHQKLLEKATEFKSEYLGLKELAYPIKKQLSAHYYRWSFHGESNCTKEFKRAANINKQIIRELIINREKDYGYLGSVNPKKQQLSLQKLTKYNEIIASENNPDNPDAPVTSGLASVKPRLSRVEKQKERELEKWTVVHQSGNFDTVQINPYRPRIKRFLQNNQQTSQANNNQPRFQNQFKKGAKP</sequence>